<keyword id="KW-0002">3D-structure</keyword>
<keyword id="KW-0903">Direct protein sequencing</keyword>
<keyword id="KW-1015">Disulfide bond</keyword>
<keyword id="KW-0256">Endoplasmic reticulum</keyword>
<keyword id="KW-0560">Oxidoreductase</keyword>
<keyword id="KW-1267">Proteomics identification</keyword>
<keyword id="KW-0676">Redox-active center</keyword>
<keyword id="KW-1185">Reference proteome</keyword>
<keyword id="KW-0732">Signal</keyword>
<protein>
    <recommendedName>
        <fullName evidence="10">Thioredoxin domain-containing protein 12</fullName>
        <ecNumber evidence="3">1.8.4.2</ecNumber>
    </recommendedName>
    <alternativeName>
        <fullName evidence="7">Endoplasmic reticulum resident protein 18</fullName>
        <shortName evidence="7">ER protein 18</shortName>
        <shortName evidence="7">ERp18</shortName>
    </alternativeName>
    <alternativeName>
        <fullName>Endoplasmic reticulum resident protein 19</fullName>
        <shortName>ER protein 19</shortName>
        <shortName>ERp19</shortName>
    </alternativeName>
    <alternativeName>
        <fullName>Thioredoxin-like protein p19</fullName>
    </alternativeName>
    <alternativeName>
        <fullName evidence="8">hTLP19</fullName>
    </alternativeName>
</protein>
<dbReference type="EC" id="1.8.4.2" evidence="3"/>
<dbReference type="EMBL" id="AF543416">
    <property type="protein sequence ID" value="AAN34781.1"/>
    <property type="molecule type" value="mRNA"/>
</dbReference>
<dbReference type="EMBL" id="AF131758">
    <property type="protein sequence ID" value="AAD20035.1"/>
    <property type="molecule type" value="mRNA"/>
</dbReference>
<dbReference type="EMBL" id="AY358982">
    <property type="protein sequence ID" value="AAQ89341.1"/>
    <property type="molecule type" value="mRNA"/>
</dbReference>
<dbReference type="EMBL" id="AK075409">
    <property type="protein sequence ID" value="BAG52132.1"/>
    <property type="molecule type" value="mRNA"/>
</dbReference>
<dbReference type="EMBL" id="AL445685">
    <property type="status" value="NOT_ANNOTATED_CDS"/>
    <property type="molecule type" value="Genomic_DNA"/>
</dbReference>
<dbReference type="EMBL" id="BC001493">
    <property type="protein sequence ID" value="AAH01493.1"/>
    <property type="molecule type" value="mRNA"/>
</dbReference>
<dbReference type="EMBL" id="BC008953">
    <property type="protein sequence ID" value="AAH08953.1"/>
    <property type="molecule type" value="mRNA"/>
</dbReference>
<dbReference type="EMBL" id="BC008913">
    <property type="protein sequence ID" value="AAH08913.1"/>
    <property type="molecule type" value="mRNA"/>
</dbReference>
<dbReference type="CCDS" id="CCDS561.1"/>
<dbReference type="RefSeq" id="NP_056997.1">
    <property type="nucleotide sequence ID" value="NM_015913.4"/>
</dbReference>
<dbReference type="PDB" id="1SEN">
    <property type="method" value="X-ray"/>
    <property type="resolution" value="1.20 A"/>
    <property type="chains" value="A=23-172"/>
</dbReference>
<dbReference type="PDB" id="2K8V">
    <property type="method" value="NMR"/>
    <property type="chains" value="A=24-172"/>
</dbReference>
<dbReference type="PDBsum" id="1SEN"/>
<dbReference type="PDBsum" id="2K8V"/>
<dbReference type="BMRB" id="O95881"/>
<dbReference type="SMR" id="O95881"/>
<dbReference type="BioGRID" id="119252">
    <property type="interactions" value="142"/>
</dbReference>
<dbReference type="FunCoup" id="O95881">
    <property type="interactions" value="1548"/>
</dbReference>
<dbReference type="IntAct" id="O95881">
    <property type="interactions" value="38"/>
</dbReference>
<dbReference type="MINT" id="O95881"/>
<dbReference type="STRING" id="9606.ENSP00000360688"/>
<dbReference type="GlyCosmos" id="O95881">
    <property type="glycosylation" value="1 site, 2 glycans"/>
</dbReference>
<dbReference type="GlyGen" id="O95881">
    <property type="glycosylation" value="1 site, 2 O-linked glycans (1 site)"/>
</dbReference>
<dbReference type="iPTMnet" id="O95881"/>
<dbReference type="PhosphoSitePlus" id="O95881"/>
<dbReference type="SwissPalm" id="O95881"/>
<dbReference type="BioMuta" id="TXNDC12"/>
<dbReference type="jPOST" id="O95881"/>
<dbReference type="MassIVE" id="O95881"/>
<dbReference type="PaxDb" id="9606-ENSP00000360688"/>
<dbReference type="PeptideAtlas" id="O95881"/>
<dbReference type="ProteomicsDB" id="51117"/>
<dbReference type="Pumba" id="O95881"/>
<dbReference type="TopDownProteomics" id="O95881"/>
<dbReference type="Antibodypedia" id="46886">
    <property type="antibodies" value="146 antibodies from 21 providers"/>
</dbReference>
<dbReference type="DNASU" id="51060"/>
<dbReference type="Ensembl" id="ENST00000371626.9">
    <property type="protein sequence ID" value="ENSP00000360688.4"/>
    <property type="gene ID" value="ENSG00000117862.14"/>
</dbReference>
<dbReference type="Ensembl" id="ENST00000715260.1">
    <property type="protein sequence ID" value="ENSP00000520430.1"/>
    <property type="gene ID" value="ENSG00000117862.14"/>
</dbReference>
<dbReference type="GeneID" id="51060"/>
<dbReference type="KEGG" id="hsa:51060"/>
<dbReference type="MANE-Select" id="ENST00000371626.9">
    <property type="protein sequence ID" value="ENSP00000360688.4"/>
    <property type="RefSeq nucleotide sequence ID" value="NM_015913.4"/>
    <property type="RefSeq protein sequence ID" value="NP_056997.1"/>
</dbReference>
<dbReference type="UCSC" id="uc001cti.5">
    <property type="organism name" value="human"/>
</dbReference>
<dbReference type="AGR" id="HGNC:24626"/>
<dbReference type="CTD" id="51060"/>
<dbReference type="DisGeNET" id="51060"/>
<dbReference type="GeneCards" id="TXNDC12"/>
<dbReference type="HGNC" id="HGNC:24626">
    <property type="gene designation" value="TXNDC12"/>
</dbReference>
<dbReference type="HPA" id="ENSG00000117862">
    <property type="expression patterns" value="Low tissue specificity"/>
</dbReference>
<dbReference type="MIM" id="609448">
    <property type="type" value="gene"/>
</dbReference>
<dbReference type="neXtProt" id="NX_O95881"/>
<dbReference type="OpenTargets" id="ENSG00000117862"/>
<dbReference type="PharmGKB" id="PA142670665"/>
<dbReference type="VEuPathDB" id="HostDB:ENSG00000117862"/>
<dbReference type="eggNOG" id="ENOG502RXP1">
    <property type="taxonomic scope" value="Eukaryota"/>
</dbReference>
<dbReference type="GeneTree" id="ENSGT00530000063273"/>
<dbReference type="HOGENOM" id="CLU_088048_2_0_1"/>
<dbReference type="InParanoid" id="O95881"/>
<dbReference type="OMA" id="SEHFVMV"/>
<dbReference type="OrthoDB" id="262308at2759"/>
<dbReference type="PAN-GO" id="O95881">
    <property type="GO annotations" value="2 GO annotations based on evolutionary models"/>
</dbReference>
<dbReference type="PhylomeDB" id="O95881"/>
<dbReference type="TreeFam" id="TF321449"/>
<dbReference type="PathwayCommons" id="O95881"/>
<dbReference type="SignaLink" id="O95881"/>
<dbReference type="BioGRID-ORCS" id="51060">
    <property type="hits" value="12 hits in 1157 CRISPR screens"/>
</dbReference>
<dbReference type="ChiTaRS" id="TXNDC12">
    <property type="organism name" value="human"/>
</dbReference>
<dbReference type="EvolutionaryTrace" id="O95881"/>
<dbReference type="GeneWiki" id="TXNDC12"/>
<dbReference type="GenomeRNAi" id="51060"/>
<dbReference type="Pharos" id="O95881">
    <property type="development level" value="Tbio"/>
</dbReference>
<dbReference type="PRO" id="PR:O95881"/>
<dbReference type="Proteomes" id="UP000005640">
    <property type="component" value="Chromosome 1"/>
</dbReference>
<dbReference type="RNAct" id="O95881">
    <property type="molecule type" value="protein"/>
</dbReference>
<dbReference type="Bgee" id="ENSG00000117862">
    <property type="expression patterns" value="Expressed in monocyte and 100 other cell types or tissues"/>
</dbReference>
<dbReference type="ExpressionAtlas" id="O95881">
    <property type="expression patterns" value="baseline and differential"/>
</dbReference>
<dbReference type="GO" id="GO:0005783">
    <property type="term" value="C:endoplasmic reticulum"/>
    <property type="evidence" value="ECO:0000318"/>
    <property type="project" value="GO_Central"/>
</dbReference>
<dbReference type="GO" id="GO:0005788">
    <property type="term" value="C:endoplasmic reticulum lumen"/>
    <property type="evidence" value="ECO:0000314"/>
    <property type="project" value="UniProtKB"/>
</dbReference>
<dbReference type="GO" id="GO:0019153">
    <property type="term" value="F:protein-disulfide reductase (glutathione) activity"/>
    <property type="evidence" value="ECO:0000314"/>
    <property type="project" value="UniProtKB"/>
</dbReference>
<dbReference type="GO" id="GO:0015035">
    <property type="term" value="F:protein-disulfide reductase activity"/>
    <property type="evidence" value="ECO:0000314"/>
    <property type="project" value="MGI"/>
</dbReference>
<dbReference type="GO" id="GO:1902236">
    <property type="term" value="P:negative regulation of endoplasmic reticulum stress-induced intrinsic apoptotic signaling pathway"/>
    <property type="evidence" value="ECO:0000314"/>
    <property type="project" value="MGI"/>
</dbReference>
<dbReference type="CDD" id="cd02959">
    <property type="entry name" value="ERp19"/>
    <property type="match status" value="1"/>
</dbReference>
<dbReference type="FunFam" id="3.40.30.10:FF:000099">
    <property type="entry name" value="thioredoxin domain-containing protein 12"/>
    <property type="match status" value="1"/>
</dbReference>
<dbReference type="Gene3D" id="3.40.30.10">
    <property type="entry name" value="Glutaredoxin"/>
    <property type="match status" value="1"/>
</dbReference>
<dbReference type="InterPro" id="IPR051099">
    <property type="entry name" value="AGR/TXD"/>
</dbReference>
<dbReference type="InterPro" id="IPR037462">
    <property type="entry name" value="ERp19"/>
</dbReference>
<dbReference type="InterPro" id="IPR036249">
    <property type="entry name" value="Thioredoxin-like_sf"/>
</dbReference>
<dbReference type="InterPro" id="IPR017937">
    <property type="entry name" value="Thioredoxin_CS"/>
</dbReference>
<dbReference type="InterPro" id="IPR013766">
    <property type="entry name" value="Thioredoxin_domain"/>
</dbReference>
<dbReference type="PANTHER" id="PTHR15337">
    <property type="entry name" value="ANTERIOR GRADIENT PROTEIN-RELATED"/>
    <property type="match status" value="1"/>
</dbReference>
<dbReference type="PANTHER" id="PTHR15337:SF10">
    <property type="entry name" value="THIOREDOXIN DOMAIN-CONTAINING PROTEIN 12"/>
    <property type="match status" value="1"/>
</dbReference>
<dbReference type="Pfam" id="PF13899">
    <property type="entry name" value="Thioredoxin_7"/>
    <property type="match status" value="1"/>
</dbReference>
<dbReference type="SUPFAM" id="SSF52833">
    <property type="entry name" value="Thioredoxin-like"/>
    <property type="match status" value="1"/>
</dbReference>
<dbReference type="PROSITE" id="PS00194">
    <property type="entry name" value="THIOREDOXIN_1"/>
    <property type="match status" value="1"/>
</dbReference>
<dbReference type="PROSITE" id="PS51352">
    <property type="entry name" value="THIOREDOXIN_2"/>
    <property type="match status" value="1"/>
</dbReference>
<proteinExistence type="evidence at protein level"/>
<name>TXD12_HUMAN</name>
<accession>O95881</accession>
<accession>B3KQS0</accession>
<accession>Q5T1T4</accession>
<accession>Q96H50</accession>
<sequence>METRPRLGATCLLGFSFLLLVISSDGHNGLGKGFGDHIHWRTLEDGKKEAAASGLPLMVIIHKSWCGACKALKPKFAESTEISELSHNFVMVNLEDEEEPKDEDFSPDGGYIPRILFLDPSGKVHPEIINENGNPSYKYFYVSAEQVVQGMKEAQERLTGDAFRKKHLEDEL</sequence>
<feature type="signal peptide" evidence="5">
    <location>
        <begin position="1"/>
        <end position="26"/>
    </location>
</feature>
<feature type="chain" id="PRO_0000034189" description="Thioredoxin domain-containing protein 12">
    <location>
        <begin position="27"/>
        <end position="172"/>
    </location>
</feature>
<feature type="domain" description="Thioredoxin" evidence="1">
    <location>
        <begin position="27"/>
        <end position="156"/>
    </location>
</feature>
<feature type="short sequence motif" description="Prevents secretion from ER" evidence="2 10">
    <location>
        <begin position="169"/>
        <end position="172"/>
    </location>
</feature>
<feature type="disulfide bond" description="Redox-active" evidence="1 3 6">
    <location>
        <begin position="66"/>
        <end position="69"/>
    </location>
</feature>
<feature type="mutagenesis site" description="Loss of protein-disulfide reductase (glutathione) activity. Loss of the formation of disulfide bonds in substrate." evidence="3">
    <original>C</original>
    <variation>S</variation>
    <location>
        <position position="66"/>
    </location>
</feature>
<feature type="mutagenesis site" description="Loss of protein-disulfide reductase (glutathione) activity. Loss of the formation of disulfide bonds in substrate." evidence="3">
    <original>C</original>
    <variation>S</variation>
    <location>
        <position position="69"/>
    </location>
</feature>
<feature type="sequence conflict" description="In Ref. 6; AAH08913." evidence="9" ref="6">
    <original>D</original>
    <variation>H</variation>
    <location>
        <position position="102"/>
    </location>
</feature>
<feature type="strand" evidence="13">
    <location>
        <begin position="33"/>
        <end position="38"/>
    </location>
</feature>
<feature type="helix" evidence="12">
    <location>
        <begin position="43"/>
        <end position="53"/>
    </location>
</feature>
<feature type="strand" evidence="12">
    <location>
        <begin position="57"/>
        <end position="62"/>
    </location>
</feature>
<feature type="helix" evidence="12">
    <location>
        <begin position="67"/>
        <end position="77"/>
    </location>
</feature>
<feature type="helix" evidence="12">
    <location>
        <begin position="80"/>
        <end position="86"/>
    </location>
</feature>
<feature type="strand" evidence="12">
    <location>
        <begin position="89"/>
        <end position="95"/>
    </location>
</feature>
<feature type="helix" evidence="12">
    <location>
        <begin position="96"/>
        <end position="98"/>
    </location>
</feature>
<feature type="helix" evidence="12">
    <location>
        <begin position="103"/>
        <end position="105"/>
    </location>
</feature>
<feature type="strand" evidence="12">
    <location>
        <begin position="112"/>
        <end position="118"/>
    </location>
</feature>
<feature type="turn" evidence="13">
    <location>
        <begin position="120"/>
        <end position="122"/>
    </location>
</feature>
<feature type="turn" evidence="13">
    <location>
        <begin position="135"/>
        <end position="139"/>
    </location>
</feature>
<feature type="helix" evidence="12">
    <location>
        <begin position="144"/>
        <end position="158"/>
    </location>
</feature>
<feature type="helix" evidence="12">
    <location>
        <begin position="159"/>
        <end position="161"/>
    </location>
</feature>
<comment type="function">
    <text evidence="3">Protein-disulfide reductase of the endoplasmic reticulum that promotes disulfide bond formation in client proteins through its thiol-disulfide oxidase activity.</text>
</comment>
<comment type="catalytic activity">
    <reaction evidence="3">
        <text>[protein]-disulfide + 2 glutathione = [protein]-dithiol + glutathione disulfide</text>
        <dbReference type="Rhea" id="RHEA:21064"/>
        <dbReference type="Rhea" id="RHEA-COMP:10593"/>
        <dbReference type="Rhea" id="RHEA-COMP:10594"/>
        <dbReference type="ChEBI" id="CHEBI:29950"/>
        <dbReference type="ChEBI" id="CHEBI:50058"/>
        <dbReference type="ChEBI" id="CHEBI:57925"/>
        <dbReference type="ChEBI" id="CHEBI:58297"/>
        <dbReference type="EC" id="1.8.4.2"/>
    </reaction>
    <physiologicalReaction direction="right-to-left" evidence="10">
        <dbReference type="Rhea" id="RHEA:21066"/>
    </physiologicalReaction>
</comment>
<comment type="biophysicochemical properties">
    <kinetics>
        <KM evidence="3">25 uM for Asn-Arg-Cys-Ser-Gln-Gly-Ser-Cys-Trp-Asn</KM>
    </kinetics>
    <phDependence>
        <text evidence="3">Optimum pH is 6.5.</text>
    </phDependence>
</comment>
<comment type="interaction">
    <interactant intactId="EBI-2564581">
        <id>O95881</id>
    </interactant>
    <interactant intactId="EBI-1748958">
        <id>P49069</id>
        <label>CAMLG</label>
    </interactant>
    <organismsDiffer>false</organismsDiffer>
    <experiments>5</experiments>
</comment>
<comment type="interaction">
    <interactant intactId="EBI-2564581">
        <id>O95881</id>
    </interactant>
    <interactant intactId="EBI-359932">
        <id>Q92785</id>
        <label>DPF2</label>
    </interactant>
    <organismsDiffer>false</organismsDiffer>
    <experiments>3</experiments>
</comment>
<comment type="interaction">
    <interactant intactId="EBI-2564581">
        <id>O95881</id>
    </interactant>
    <interactant intactId="EBI-3918971">
        <id>Q9Y680</id>
        <label>FKBP7</label>
    </interactant>
    <organismsDiffer>false</organismsDiffer>
    <experiments>3</experiments>
</comment>
<comment type="interaction">
    <interactant intactId="EBI-2564581">
        <id>O95881</id>
    </interactant>
    <interactant intactId="EBI-746999">
        <id>O95198</id>
        <label>KLHL2</label>
    </interactant>
    <organismsDiffer>false</organismsDiffer>
    <experiments>4</experiments>
</comment>
<comment type="interaction">
    <interactant intactId="EBI-2564581">
        <id>O95881</id>
    </interactant>
    <interactant intactId="EBI-347996">
        <id>O43765</id>
        <label>SGTA</label>
    </interactant>
    <organismsDiffer>false</organismsDiffer>
    <experiments>3</experiments>
</comment>
<comment type="interaction">
    <interactant intactId="EBI-2564581">
        <id>O95881</id>
    </interactant>
    <interactant intactId="EBI-744081">
        <id>Q96EQ0</id>
        <label>SGTB</label>
    </interactant>
    <organismsDiffer>false</organismsDiffer>
    <experiments>6</experiments>
</comment>
<comment type="interaction">
    <interactant intactId="EBI-2564581">
        <id>O95881</id>
    </interactant>
    <interactant intactId="EBI-741480">
        <id>Q9UMX0</id>
        <label>UBQLN1</label>
    </interactant>
    <organismsDiffer>false</organismsDiffer>
    <experiments>4</experiments>
</comment>
<comment type="interaction">
    <interactant intactId="EBI-2564581">
        <id>O95881</id>
    </interactant>
    <interactant intactId="EBI-10173939">
        <id>Q9UMX0-2</id>
        <label>UBQLN1</label>
    </interactant>
    <organismsDiffer>false</organismsDiffer>
    <experiments>3</experiments>
</comment>
<comment type="interaction">
    <interactant intactId="EBI-2564581">
        <id>O95881</id>
    </interactant>
    <interactant intactId="EBI-947187">
        <id>Q9UHD9</id>
        <label>UBQLN2</label>
    </interactant>
    <organismsDiffer>false</organismsDiffer>
    <experiments>3</experiments>
</comment>
<comment type="subcellular location">
    <subcellularLocation>
        <location evidence="2 3">Endoplasmic reticulum lumen</location>
    </subcellularLocation>
</comment>
<comment type="tissue specificity">
    <text evidence="4">Widely expressed.</text>
</comment>
<organism>
    <name type="scientific">Homo sapiens</name>
    <name type="common">Human</name>
    <dbReference type="NCBI Taxonomy" id="9606"/>
    <lineage>
        <taxon>Eukaryota</taxon>
        <taxon>Metazoa</taxon>
        <taxon>Chordata</taxon>
        <taxon>Craniata</taxon>
        <taxon>Vertebrata</taxon>
        <taxon>Euteleostomi</taxon>
        <taxon>Mammalia</taxon>
        <taxon>Eutheria</taxon>
        <taxon>Euarchontoglires</taxon>
        <taxon>Primates</taxon>
        <taxon>Haplorrhini</taxon>
        <taxon>Catarrhini</taxon>
        <taxon>Hominidae</taxon>
        <taxon>Homo</taxon>
    </lineage>
</organism>
<reference key="1">
    <citation type="journal article" date="2003" name="Gene">
        <title>Isolation and characterization of a novel human thioredoxin-like gene hTLP19 encoding a secretory protein.</title>
        <authorList>
            <person name="Liu F."/>
            <person name="Rong Y.P."/>
            <person name="Zeng L.C."/>
            <person name="Zhang X."/>
            <person name="Han Z.G."/>
        </authorList>
    </citation>
    <scope>NUCLEOTIDE SEQUENCE [MRNA]</scope>
    <scope>TISSUE SPECIFICITY</scope>
</reference>
<reference key="2">
    <citation type="submission" date="1999-02" db="EMBL/GenBank/DDBJ databases">
        <authorList>
            <person name="Mei G."/>
            <person name="Yu W."/>
            <person name="Gibbs R.A."/>
        </authorList>
    </citation>
    <scope>NUCLEOTIDE SEQUENCE [LARGE SCALE MRNA]</scope>
    <source>
        <tissue>Brain</tissue>
    </source>
</reference>
<reference key="3">
    <citation type="journal article" date="2003" name="Genome Res.">
        <title>The secreted protein discovery initiative (SPDI), a large-scale effort to identify novel human secreted and transmembrane proteins: a bioinformatics assessment.</title>
        <authorList>
            <person name="Clark H.F."/>
            <person name="Gurney A.L."/>
            <person name="Abaya E."/>
            <person name="Baker K."/>
            <person name="Baldwin D.T."/>
            <person name="Brush J."/>
            <person name="Chen J."/>
            <person name="Chow B."/>
            <person name="Chui C."/>
            <person name="Crowley C."/>
            <person name="Currell B."/>
            <person name="Deuel B."/>
            <person name="Dowd P."/>
            <person name="Eaton D."/>
            <person name="Foster J.S."/>
            <person name="Grimaldi C."/>
            <person name="Gu Q."/>
            <person name="Hass P.E."/>
            <person name="Heldens S."/>
            <person name="Huang A."/>
            <person name="Kim H.S."/>
            <person name="Klimowski L."/>
            <person name="Jin Y."/>
            <person name="Johnson S."/>
            <person name="Lee J."/>
            <person name="Lewis L."/>
            <person name="Liao D."/>
            <person name="Mark M.R."/>
            <person name="Robbie E."/>
            <person name="Sanchez C."/>
            <person name="Schoenfeld J."/>
            <person name="Seshagiri S."/>
            <person name="Simmons L."/>
            <person name="Singh J."/>
            <person name="Smith V."/>
            <person name="Stinson J."/>
            <person name="Vagts A."/>
            <person name="Vandlen R.L."/>
            <person name="Watanabe C."/>
            <person name="Wieand D."/>
            <person name="Woods K."/>
            <person name="Xie M.-H."/>
            <person name="Yansura D.G."/>
            <person name="Yi S."/>
            <person name="Yu G."/>
            <person name="Yuan J."/>
            <person name="Zhang M."/>
            <person name="Zhang Z."/>
            <person name="Goddard A.D."/>
            <person name="Wood W.I."/>
            <person name="Godowski P.J."/>
            <person name="Gray A.M."/>
        </authorList>
    </citation>
    <scope>NUCLEOTIDE SEQUENCE [LARGE SCALE MRNA]</scope>
</reference>
<reference key="4">
    <citation type="journal article" date="2005" name="DNA Res.">
        <title>Signal sequence and keyword trap in silico for selection of full-length human cDNAs encoding secretion or membrane proteins from oligo-capped cDNA libraries.</title>
        <authorList>
            <person name="Otsuki T."/>
            <person name="Ota T."/>
            <person name="Nishikawa T."/>
            <person name="Hayashi K."/>
            <person name="Suzuki Y."/>
            <person name="Yamamoto J."/>
            <person name="Wakamatsu A."/>
            <person name="Kimura K."/>
            <person name="Sakamoto K."/>
            <person name="Hatano N."/>
            <person name="Kawai Y."/>
            <person name="Ishii S."/>
            <person name="Saito K."/>
            <person name="Kojima S."/>
            <person name="Sugiyama T."/>
            <person name="Ono T."/>
            <person name="Okano K."/>
            <person name="Yoshikawa Y."/>
            <person name="Aotsuka S."/>
            <person name="Sasaki N."/>
            <person name="Hattori A."/>
            <person name="Okumura K."/>
            <person name="Nagai K."/>
            <person name="Sugano S."/>
            <person name="Isogai T."/>
        </authorList>
    </citation>
    <scope>NUCLEOTIDE SEQUENCE [LARGE SCALE MRNA]</scope>
</reference>
<reference key="5">
    <citation type="journal article" date="2006" name="Nature">
        <title>The DNA sequence and biological annotation of human chromosome 1.</title>
        <authorList>
            <person name="Gregory S.G."/>
            <person name="Barlow K.F."/>
            <person name="McLay K.E."/>
            <person name="Kaul R."/>
            <person name="Swarbreck D."/>
            <person name="Dunham A."/>
            <person name="Scott C.E."/>
            <person name="Howe K.L."/>
            <person name="Woodfine K."/>
            <person name="Spencer C.C.A."/>
            <person name="Jones M.C."/>
            <person name="Gillson C."/>
            <person name="Searle S."/>
            <person name="Zhou Y."/>
            <person name="Kokocinski F."/>
            <person name="McDonald L."/>
            <person name="Evans R."/>
            <person name="Phillips K."/>
            <person name="Atkinson A."/>
            <person name="Cooper R."/>
            <person name="Jones C."/>
            <person name="Hall R.E."/>
            <person name="Andrews T.D."/>
            <person name="Lloyd C."/>
            <person name="Ainscough R."/>
            <person name="Almeida J.P."/>
            <person name="Ambrose K.D."/>
            <person name="Anderson F."/>
            <person name="Andrew R.W."/>
            <person name="Ashwell R.I.S."/>
            <person name="Aubin K."/>
            <person name="Babbage A.K."/>
            <person name="Bagguley C.L."/>
            <person name="Bailey J."/>
            <person name="Beasley H."/>
            <person name="Bethel G."/>
            <person name="Bird C.P."/>
            <person name="Bray-Allen S."/>
            <person name="Brown J.Y."/>
            <person name="Brown A.J."/>
            <person name="Buckley D."/>
            <person name="Burton J."/>
            <person name="Bye J."/>
            <person name="Carder C."/>
            <person name="Chapman J.C."/>
            <person name="Clark S.Y."/>
            <person name="Clarke G."/>
            <person name="Clee C."/>
            <person name="Cobley V."/>
            <person name="Collier R.E."/>
            <person name="Corby N."/>
            <person name="Coville G.J."/>
            <person name="Davies J."/>
            <person name="Deadman R."/>
            <person name="Dunn M."/>
            <person name="Earthrowl M."/>
            <person name="Ellington A.G."/>
            <person name="Errington H."/>
            <person name="Frankish A."/>
            <person name="Frankland J."/>
            <person name="French L."/>
            <person name="Garner P."/>
            <person name="Garnett J."/>
            <person name="Gay L."/>
            <person name="Ghori M.R.J."/>
            <person name="Gibson R."/>
            <person name="Gilby L.M."/>
            <person name="Gillett W."/>
            <person name="Glithero R.J."/>
            <person name="Grafham D.V."/>
            <person name="Griffiths C."/>
            <person name="Griffiths-Jones S."/>
            <person name="Grocock R."/>
            <person name="Hammond S."/>
            <person name="Harrison E.S.I."/>
            <person name="Hart E."/>
            <person name="Haugen E."/>
            <person name="Heath P.D."/>
            <person name="Holmes S."/>
            <person name="Holt K."/>
            <person name="Howden P.J."/>
            <person name="Hunt A.R."/>
            <person name="Hunt S.E."/>
            <person name="Hunter G."/>
            <person name="Isherwood J."/>
            <person name="James R."/>
            <person name="Johnson C."/>
            <person name="Johnson D."/>
            <person name="Joy A."/>
            <person name="Kay M."/>
            <person name="Kershaw J.K."/>
            <person name="Kibukawa M."/>
            <person name="Kimberley A.M."/>
            <person name="King A."/>
            <person name="Knights A.J."/>
            <person name="Lad H."/>
            <person name="Laird G."/>
            <person name="Lawlor S."/>
            <person name="Leongamornlert D.A."/>
            <person name="Lloyd D.M."/>
            <person name="Loveland J."/>
            <person name="Lovell J."/>
            <person name="Lush M.J."/>
            <person name="Lyne R."/>
            <person name="Martin S."/>
            <person name="Mashreghi-Mohammadi M."/>
            <person name="Matthews L."/>
            <person name="Matthews N.S.W."/>
            <person name="McLaren S."/>
            <person name="Milne S."/>
            <person name="Mistry S."/>
            <person name="Moore M.J.F."/>
            <person name="Nickerson T."/>
            <person name="O'Dell C.N."/>
            <person name="Oliver K."/>
            <person name="Palmeiri A."/>
            <person name="Palmer S.A."/>
            <person name="Parker A."/>
            <person name="Patel D."/>
            <person name="Pearce A.V."/>
            <person name="Peck A.I."/>
            <person name="Pelan S."/>
            <person name="Phelps K."/>
            <person name="Phillimore B.J."/>
            <person name="Plumb R."/>
            <person name="Rajan J."/>
            <person name="Raymond C."/>
            <person name="Rouse G."/>
            <person name="Saenphimmachak C."/>
            <person name="Sehra H.K."/>
            <person name="Sheridan E."/>
            <person name="Shownkeen R."/>
            <person name="Sims S."/>
            <person name="Skuce C.D."/>
            <person name="Smith M."/>
            <person name="Steward C."/>
            <person name="Subramanian S."/>
            <person name="Sycamore N."/>
            <person name="Tracey A."/>
            <person name="Tromans A."/>
            <person name="Van Helmond Z."/>
            <person name="Wall M."/>
            <person name="Wallis J.M."/>
            <person name="White S."/>
            <person name="Whitehead S.L."/>
            <person name="Wilkinson J.E."/>
            <person name="Willey D.L."/>
            <person name="Williams H."/>
            <person name="Wilming L."/>
            <person name="Wray P.W."/>
            <person name="Wu Z."/>
            <person name="Coulson A."/>
            <person name="Vaudin M."/>
            <person name="Sulston J.E."/>
            <person name="Durbin R.M."/>
            <person name="Hubbard T."/>
            <person name="Wooster R."/>
            <person name="Dunham I."/>
            <person name="Carter N.P."/>
            <person name="McVean G."/>
            <person name="Ross M.T."/>
            <person name="Harrow J."/>
            <person name="Olson M.V."/>
            <person name="Beck S."/>
            <person name="Rogers J."/>
            <person name="Bentley D.R."/>
        </authorList>
    </citation>
    <scope>NUCLEOTIDE SEQUENCE [LARGE SCALE GENOMIC DNA]</scope>
</reference>
<reference key="6">
    <citation type="journal article" date="2004" name="Genome Res.">
        <title>The status, quality, and expansion of the NIH full-length cDNA project: the Mammalian Gene Collection (MGC).</title>
        <authorList>
            <consortium name="The MGC Project Team"/>
        </authorList>
    </citation>
    <scope>NUCLEOTIDE SEQUENCE [LARGE SCALE MRNA]</scope>
    <source>
        <tissue>Colon</tissue>
        <tissue>Kidney</tissue>
        <tissue>Ovary</tissue>
    </source>
</reference>
<reference key="7">
    <citation type="journal article" date="2004" name="Protein Sci.">
        <title>Signal peptide prediction based on analysis of experimentally verified cleavage sites.</title>
        <authorList>
            <person name="Zhang Z."/>
            <person name="Henzel W.J."/>
        </authorList>
    </citation>
    <scope>PROTEIN SEQUENCE OF 27-41</scope>
</reference>
<reference key="8">
    <citation type="journal article" date="2003" name="J. Biol. Chem.">
        <title>Functional characterization of ERp18, a new endoplasmic reticulum-located thioredoxin superfamily member.</title>
        <authorList>
            <person name="Alanen H.I."/>
            <person name="Williamson R.A."/>
            <person name="Howard M.J."/>
            <person name="Lappi A.-K."/>
            <person name="Jaentti H.P."/>
            <person name="Rautio S.M."/>
            <person name="Kellokumpu S."/>
            <person name="Ruddock L.W."/>
        </authorList>
    </citation>
    <scope>FUNCTION</scope>
    <scope>CATALYTIC ACTIVITY</scope>
    <scope>BIOPHYSICOCHEMICAL PROPERTIES</scope>
    <scope>SUBCELLULAR LOCATION</scope>
    <scope>DISULFIDE BOND</scope>
    <scope>MUTAGENESIS OF CYS-66 AND CYS-69</scope>
    <scope>MOTIF</scope>
</reference>
<reference key="9">
    <citation type="journal article" date="2011" name="BMC Syst. Biol.">
        <title>Initial characterization of the human central proteome.</title>
        <authorList>
            <person name="Burkard T.R."/>
            <person name="Planyavsky M."/>
            <person name="Kaupe I."/>
            <person name="Breitwieser F.P."/>
            <person name="Buerckstuemmer T."/>
            <person name="Bennett K.L."/>
            <person name="Superti-Furga G."/>
            <person name="Colinge J."/>
        </authorList>
    </citation>
    <scope>IDENTIFICATION BY MASS SPECTROMETRY [LARGE SCALE ANALYSIS]</scope>
</reference>
<reference key="10">
    <citation type="journal article" date="2014" name="J. Proteomics">
        <title>An enzyme assisted RP-RPLC approach for in-depth analysis of human liver phosphoproteome.</title>
        <authorList>
            <person name="Bian Y."/>
            <person name="Song C."/>
            <person name="Cheng K."/>
            <person name="Dong M."/>
            <person name="Wang F."/>
            <person name="Huang J."/>
            <person name="Sun D."/>
            <person name="Wang L."/>
            <person name="Ye M."/>
            <person name="Zou H."/>
        </authorList>
    </citation>
    <scope>IDENTIFICATION BY MASS SPECTROMETRY [LARGE SCALE ANALYSIS]</scope>
    <source>
        <tissue>Liver</tissue>
    </source>
</reference>
<reference key="11">
    <citation type="journal article" date="2015" name="Proteomics">
        <title>N-terminome analysis of the human mitochondrial proteome.</title>
        <authorList>
            <person name="Vaca Jacome A.S."/>
            <person name="Rabilloud T."/>
            <person name="Schaeffer-Reiss C."/>
            <person name="Rompais M."/>
            <person name="Ayoub D."/>
            <person name="Lane L."/>
            <person name="Bairoch A."/>
            <person name="Van Dorsselaer A."/>
            <person name="Carapito C."/>
        </authorList>
    </citation>
    <scope>IDENTIFICATION BY MASS SPECTROMETRY [LARGE SCALE ANALYSIS]</scope>
</reference>
<reference key="12">
    <citation type="journal article" date="2009" name="Biochemistry">
        <title>Solution structure and dynamics of ERp18, a small endoplasmic reticulum resident oxidoreductase.</title>
        <authorList>
            <person name="Rowe M.L."/>
            <person name="Ruddock L.W."/>
            <person name="Kelly G."/>
            <person name="Schmidt J.M."/>
            <person name="Williamson R.A."/>
            <person name="Howard M.J."/>
        </authorList>
    </citation>
    <scope>STRUCTURE BY NMR OF 24-172</scope>
    <scope>DISULFIDE BOND</scope>
</reference>
<gene>
    <name evidence="11" type="primary">TXNDC12</name>
    <name evidence="8" type="synonym">TLP19</name>
    <name type="ORF">UNQ713/PRO1376</name>
</gene>
<evidence type="ECO:0000255" key="1">
    <source>
        <dbReference type="PROSITE-ProRule" id="PRU00691"/>
    </source>
</evidence>
<evidence type="ECO:0000255" key="2">
    <source>
        <dbReference type="PROSITE-ProRule" id="PRU10138"/>
    </source>
</evidence>
<evidence type="ECO:0000269" key="3">
    <source>
    </source>
</evidence>
<evidence type="ECO:0000269" key="4">
    <source>
    </source>
</evidence>
<evidence type="ECO:0000269" key="5">
    <source>
    </source>
</evidence>
<evidence type="ECO:0000269" key="6">
    <source>
    </source>
</evidence>
<evidence type="ECO:0000303" key="7">
    <source>
    </source>
</evidence>
<evidence type="ECO:0000303" key="8">
    <source>
    </source>
</evidence>
<evidence type="ECO:0000305" key="9"/>
<evidence type="ECO:0000305" key="10">
    <source>
    </source>
</evidence>
<evidence type="ECO:0000312" key="11">
    <source>
        <dbReference type="HGNC" id="HGNC:24626"/>
    </source>
</evidence>
<evidence type="ECO:0007829" key="12">
    <source>
        <dbReference type="PDB" id="1SEN"/>
    </source>
</evidence>
<evidence type="ECO:0007829" key="13">
    <source>
        <dbReference type="PDB" id="2K8V"/>
    </source>
</evidence>